<proteinExistence type="inferred from homology"/>
<accession>A7GXQ2</accession>
<dbReference type="EMBL" id="CP000767">
    <property type="protein sequence ID" value="EAU00633.1"/>
    <property type="molecule type" value="Genomic_DNA"/>
</dbReference>
<dbReference type="RefSeq" id="WP_009650290.1">
    <property type="nucleotide sequence ID" value="NC_009715.2"/>
</dbReference>
<dbReference type="SMR" id="A7GXQ2"/>
<dbReference type="STRING" id="360105.CCV52592_1587"/>
<dbReference type="GeneID" id="61001996"/>
<dbReference type="KEGG" id="ccv:CCV52592_1587"/>
<dbReference type="HOGENOM" id="CLU_148710_2_2_7"/>
<dbReference type="OrthoDB" id="9812008at2"/>
<dbReference type="Proteomes" id="UP000006380">
    <property type="component" value="Chromosome"/>
</dbReference>
<dbReference type="GO" id="GO:0022627">
    <property type="term" value="C:cytosolic small ribosomal subunit"/>
    <property type="evidence" value="ECO:0007669"/>
    <property type="project" value="TreeGrafter"/>
</dbReference>
<dbReference type="GO" id="GO:0070181">
    <property type="term" value="F:small ribosomal subunit rRNA binding"/>
    <property type="evidence" value="ECO:0007669"/>
    <property type="project" value="TreeGrafter"/>
</dbReference>
<dbReference type="GO" id="GO:0003735">
    <property type="term" value="F:structural constituent of ribosome"/>
    <property type="evidence" value="ECO:0007669"/>
    <property type="project" value="InterPro"/>
</dbReference>
<dbReference type="GO" id="GO:0006412">
    <property type="term" value="P:translation"/>
    <property type="evidence" value="ECO:0007669"/>
    <property type="project" value="UniProtKB-UniRule"/>
</dbReference>
<dbReference type="Gene3D" id="4.10.640.10">
    <property type="entry name" value="Ribosomal protein S18"/>
    <property type="match status" value="1"/>
</dbReference>
<dbReference type="HAMAP" id="MF_00270">
    <property type="entry name" value="Ribosomal_bS18"/>
    <property type="match status" value="1"/>
</dbReference>
<dbReference type="InterPro" id="IPR001648">
    <property type="entry name" value="Ribosomal_bS18"/>
</dbReference>
<dbReference type="InterPro" id="IPR036870">
    <property type="entry name" value="Ribosomal_bS18_sf"/>
</dbReference>
<dbReference type="NCBIfam" id="TIGR00165">
    <property type="entry name" value="S18"/>
    <property type="match status" value="1"/>
</dbReference>
<dbReference type="PANTHER" id="PTHR13479">
    <property type="entry name" value="30S RIBOSOMAL PROTEIN S18"/>
    <property type="match status" value="1"/>
</dbReference>
<dbReference type="PANTHER" id="PTHR13479:SF40">
    <property type="entry name" value="SMALL RIBOSOMAL SUBUNIT PROTEIN BS18M"/>
    <property type="match status" value="1"/>
</dbReference>
<dbReference type="Pfam" id="PF01084">
    <property type="entry name" value="Ribosomal_S18"/>
    <property type="match status" value="1"/>
</dbReference>
<dbReference type="PRINTS" id="PR00974">
    <property type="entry name" value="RIBOSOMALS18"/>
</dbReference>
<dbReference type="SUPFAM" id="SSF46911">
    <property type="entry name" value="Ribosomal protein S18"/>
    <property type="match status" value="1"/>
</dbReference>
<name>RS18_CAMC5</name>
<comment type="function">
    <text evidence="1">Binds as a heterodimer with protein bS6 to the central domain of the 16S rRNA, where it helps stabilize the platform of the 30S subunit.</text>
</comment>
<comment type="subunit">
    <text evidence="1">Part of the 30S ribosomal subunit. Forms a tight heterodimer with protein bS6.</text>
</comment>
<comment type="similarity">
    <text evidence="1">Belongs to the bacterial ribosomal protein bS18 family.</text>
</comment>
<sequence>MAEKRKYSRKYCKYTEAKIDFIDYKDTSLLKYCLSERFKIMPRRLTGTSKKYQEMVEKAIKRARHAAIIPYIVDRKDVVTNPFEGI</sequence>
<gene>
    <name evidence="1" type="primary">rpsR</name>
    <name type="ordered locus">Ccur92_06900</name>
    <name type="ORF">CCV52592_1587</name>
</gene>
<keyword id="KW-1185">Reference proteome</keyword>
<keyword id="KW-0687">Ribonucleoprotein</keyword>
<keyword id="KW-0689">Ribosomal protein</keyword>
<keyword id="KW-0694">RNA-binding</keyword>
<keyword id="KW-0699">rRNA-binding</keyword>
<reference key="1">
    <citation type="submission" date="2007-07" db="EMBL/GenBank/DDBJ databases">
        <title>Genome sequence of Campylobacter curvus 525.92 isolated from human feces.</title>
        <authorList>
            <person name="Fouts D.E."/>
            <person name="Mongodin E.F."/>
            <person name="Puiu D."/>
            <person name="Sebastian Y."/>
            <person name="Miller W.G."/>
            <person name="Mandrell R.E."/>
            <person name="Lastovica A.J."/>
            <person name="Nelson K.E."/>
        </authorList>
    </citation>
    <scope>NUCLEOTIDE SEQUENCE [LARGE SCALE GENOMIC DNA]</scope>
    <source>
        <strain>525.92</strain>
    </source>
</reference>
<evidence type="ECO:0000255" key="1">
    <source>
        <dbReference type="HAMAP-Rule" id="MF_00270"/>
    </source>
</evidence>
<evidence type="ECO:0000305" key="2"/>
<organism>
    <name type="scientific">Campylobacter curvus (strain 525.92)</name>
    <dbReference type="NCBI Taxonomy" id="360105"/>
    <lineage>
        <taxon>Bacteria</taxon>
        <taxon>Pseudomonadati</taxon>
        <taxon>Campylobacterota</taxon>
        <taxon>Epsilonproteobacteria</taxon>
        <taxon>Campylobacterales</taxon>
        <taxon>Campylobacteraceae</taxon>
        <taxon>Campylobacter</taxon>
    </lineage>
</organism>
<feature type="chain" id="PRO_1000003471" description="Small ribosomal subunit protein bS18">
    <location>
        <begin position="1"/>
        <end position="86"/>
    </location>
</feature>
<protein>
    <recommendedName>
        <fullName evidence="1">Small ribosomal subunit protein bS18</fullName>
    </recommendedName>
    <alternativeName>
        <fullName evidence="2">30S ribosomal protein S18</fullName>
    </alternativeName>
</protein>